<name>PAFC_MYCTU</name>
<dbReference type="EMBL" id="DQ990836">
    <property type="protein sequence ID" value="ABJ90142.1"/>
    <property type="molecule type" value="Genomic_DNA"/>
</dbReference>
<dbReference type="EMBL" id="AL123456">
    <property type="protein sequence ID" value="CCP44870.1"/>
    <property type="molecule type" value="Genomic_DNA"/>
</dbReference>
<dbReference type="PIR" id="B70768">
    <property type="entry name" value="B70768"/>
</dbReference>
<dbReference type="RefSeq" id="NP_216611.1">
    <property type="nucleotide sequence ID" value="NC_000962.3"/>
</dbReference>
<dbReference type="RefSeq" id="WP_003410772.1">
    <property type="nucleotide sequence ID" value="NZ_NVQJ01000061.1"/>
</dbReference>
<dbReference type="SMR" id="P9WIL9"/>
<dbReference type="STRING" id="83332.Rv2095c"/>
<dbReference type="PaxDb" id="83332-Rv2095c"/>
<dbReference type="DNASU" id="888403"/>
<dbReference type="GeneID" id="888403"/>
<dbReference type="KEGG" id="mtu:Rv2095c"/>
<dbReference type="KEGG" id="mtv:RVBD_2095c"/>
<dbReference type="TubercuList" id="Rv2095c"/>
<dbReference type="eggNOG" id="COG2378">
    <property type="taxonomic scope" value="Bacteria"/>
</dbReference>
<dbReference type="InParanoid" id="P9WIL9"/>
<dbReference type="OrthoDB" id="5174471at2"/>
<dbReference type="PhylomeDB" id="P9WIL9"/>
<dbReference type="Proteomes" id="UP000001584">
    <property type="component" value="Chromosome"/>
</dbReference>
<dbReference type="GO" id="GO:0009274">
    <property type="term" value="C:peptidoglycan-based cell wall"/>
    <property type="evidence" value="ECO:0007005"/>
    <property type="project" value="MTBBASE"/>
</dbReference>
<dbReference type="InterPro" id="IPR051534">
    <property type="entry name" value="CBASS_pafABC_assoc_protein"/>
</dbReference>
<dbReference type="InterPro" id="IPR028349">
    <property type="entry name" value="PafC"/>
</dbReference>
<dbReference type="InterPro" id="IPR043839">
    <property type="entry name" value="PafC_HTH"/>
</dbReference>
<dbReference type="InterPro" id="IPR026881">
    <property type="entry name" value="WYL_dom"/>
</dbReference>
<dbReference type="PANTHER" id="PTHR34580">
    <property type="match status" value="1"/>
</dbReference>
<dbReference type="PANTHER" id="PTHR34580:SF1">
    <property type="entry name" value="PROTEIN PAFC"/>
    <property type="match status" value="1"/>
</dbReference>
<dbReference type="Pfam" id="PF19187">
    <property type="entry name" value="HTH_PafC"/>
    <property type="match status" value="1"/>
</dbReference>
<dbReference type="Pfam" id="PF13280">
    <property type="entry name" value="WYL"/>
    <property type="match status" value="1"/>
</dbReference>
<dbReference type="PIRSF" id="PIRSF016838">
    <property type="entry name" value="PafC"/>
    <property type="match status" value="1"/>
</dbReference>
<dbReference type="PROSITE" id="PS52050">
    <property type="entry name" value="WYL"/>
    <property type="match status" value="1"/>
</dbReference>
<sequence length="316" mass="33764">MSALSTRLVRLLNMVPYFQANPRITRAEAAAELGVTAKQLEEDLNQLWMCGLPGYSPGDLIDFEFCGDTIEVTFSAGIDRPLKLTSPEATGLLVALRALADIPGVVDPQAARSAIAKIAAAAGAVAAVAEQAPTESPAAAAVRAAVRNSRALTIDYYAASHDTLTTRIVDPIRVLLIGGHSYLEAWSREAEGVRLFRFDRIVDAAELGEPAVPPESARQAPPDTSLFDGDLSLPSATLRVAPSASWMLEYYPIRELRQLPDGSCEVAMTYASEDWMTRLLLGFGSDVRVLAPESLAQRVRDAATAALDAYQAAAPP</sequence>
<comment type="function">
    <text evidence="2">Part of the pafABC operon, but PafC does not seem to be involved in pupylation or substrate degradation. Appears to play at least a small role in resistance to reactive nitrogen intermediates (RNI) in vitro.</text>
</comment>
<comment type="subunit">
    <text evidence="2">Interacts with PafB; with which it probably forms a heterocomplex.</text>
</comment>
<comment type="disruption phenotype">
    <text evidence="2">Cells lacking this gene are not severely sensitized to RNI and display no accumulation of the proteasome substrates Mpa, FabD and PanB.</text>
</comment>
<comment type="similarity">
    <text evidence="3">Belongs to the PafC family.</text>
</comment>
<organism>
    <name type="scientific">Mycobacterium tuberculosis (strain ATCC 25618 / H37Rv)</name>
    <dbReference type="NCBI Taxonomy" id="83332"/>
    <lineage>
        <taxon>Bacteria</taxon>
        <taxon>Bacillati</taxon>
        <taxon>Actinomycetota</taxon>
        <taxon>Actinomycetes</taxon>
        <taxon>Mycobacteriales</taxon>
        <taxon>Mycobacteriaceae</taxon>
        <taxon>Mycobacterium</taxon>
        <taxon>Mycobacterium tuberculosis complex</taxon>
    </lineage>
</organism>
<reference key="1">
    <citation type="journal article" date="2007" name="J. Bacteriol.">
        <title>Characterization of the proteasome accessory factor (paf) operon in Mycobacterium tuberculosis.</title>
        <authorList>
            <person name="Festa R.A."/>
            <person name="Pearce M.J."/>
            <person name="Darwin K.H."/>
        </authorList>
    </citation>
    <scope>NUCLEOTIDE SEQUENCE [GENOMIC DNA]</scope>
    <scope>ROLE IN RESISTANCE TO RNI</scope>
    <scope>OPERON STRUCTURE</scope>
    <scope>INTERACTION WITH PAFC</scope>
    <scope>DISRUPTION PHENOTYPE</scope>
    <source>
        <strain>ATCC 25618 / H37Rv</strain>
    </source>
</reference>
<reference key="2">
    <citation type="journal article" date="1998" name="Nature">
        <title>Deciphering the biology of Mycobacterium tuberculosis from the complete genome sequence.</title>
        <authorList>
            <person name="Cole S.T."/>
            <person name="Brosch R."/>
            <person name="Parkhill J."/>
            <person name="Garnier T."/>
            <person name="Churcher C.M."/>
            <person name="Harris D.E."/>
            <person name="Gordon S.V."/>
            <person name="Eiglmeier K."/>
            <person name="Gas S."/>
            <person name="Barry C.E. III"/>
            <person name="Tekaia F."/>
            <person name="Badcock K."/>
            <person name="Basham D."/>
            <person name="Brown D."/>
            <person name="Chillingworth T."/>
            <person name="Connor R."/>
            <person name="Davies R.M."/>
            <person name="Devlin K."/>
            <person name="Feltwell T."/>
            <person name="Gentles S."/>
            <person name="Hamlin N."/>
            <person name="Holroyd S."/>
            <person name="Hornsby T."/>
            <person name="Jagels K."/>
            <person name="Krogh A."/>
            <person name="McLean J."/>
            <person name="Moule S."/>
            <person name="Murphy L.D."/>
            <person name="Oliver S."/>
            <person name="Osborne J."/>
            <person name="Quail M.A."/>
            <person name="Rajandream M.A."/>
            <person name="Rogers J."/>
            <person name="Rutter S."/>
            <person name="Seeger K."/>
            <person name="Skelton S."/>
            <person name="Squares S."/>
            <person name="Squares R."/>
            <person name="Sulston J.E."/>
            <person name="Taylor K."/>
            <person name="Whitehead S."/>
            <person name="Barrell B.G."/>
        </authorList>
    </citation>
    <scope>NUCLEOTIDE SEQUENCE [LARGE SCALE GENOMIC DNA]</scope>
    <source>
        <strain>ATCC 25618 / H37Rv</strain>
    </source>
</reference>
<reference key="3">
    <citation type="journal article" date="2011" name="Mol. Cell. Proteomics">
        <title>Proteogenomic analysis of Mycobacterium tuberculosis by high resolution mass spectrometry.</title>
        <authorList>
            <person name="Kelkar D.S."/>
            <person name="Kumar D."/>
            <person name="Kumar P."/>
            <person name="Balakrishnan L."/>
            <person name="Muthusamy B."/>
            <person name="Yadav A.K."/>
            <person name="Shrivastava P."/>
            <person name="Marimuthu A."/>
            <person name="Anand S."/>
            <person name="Sundaram H."/>
            <person name="Kingsbury R."/>
            <person name="Harsha H.C."/>
            <person name="Nair B."/>
            <person name="Prasad T.S."/>
            <person name="Chauhan D.S."/>
            <person name="Katoch K."/>
            <person name="Katoch V.M."/>
            <person name="Kumar P."/>
            <person name="Chaerkady R."/>
            <person name="Ramachandran S."/>
            <person name="Dash D."/>
            <person name="Pandey A."/>
        </authorList>
    </citation>
    <scope>IDENTIFICATION BY MASS SPECTROMETRY [LARGE SCALE ANALYSIS]</scope>
    <source>
        <strain>ATCC 25618 / H37Rv</strain>
    </source>
</reference>
<feature type="chain" id="PRO_0000014122" description="Protein PafC">
    <location>
        <begin position="1"/>
        <end position="316"/>
    </location>
</feature>
<feature type="domain" description="WYL" evidence="1">
    <location>
        <begin position="131"/>
        <end position="211"/>
    </location>
</feature>
<proteinExistence type="evidence at protein level"/>
<keyword id="KW-1185">Reference proteome</keyword>
<accession>P9WIL9</accession>
<accession>A0A113</accession>
<accession>L0TBD1</accession>
<accession>Q10704</accession>
<gene>
    <name type="primary">pafC</name>
    <name type="ordered locus">Rv2095c</name>
    <name type="ORF">MTCY49.35c</name>
</gene>
<protein>
    <recommendedName>
        <fullName>Protein PafC</fullName>
    </recommendedName>
    <alternativeName>
        <fullName>Proteasome accessory factor C</fullName>
    </alternativeName>
</protein>
<evidence type="ECO:0000255" key="1">
    <source>
        <dbReference type="PROSITE-ProRule" id="PRU01395"/>
    </source>
</evidence>
<evidence type="ECO:0000269" key="2">
    <source>
    </source>
</evidence>
<evidence type="ECO:0000305" key="3"/>